<accession>Q13206</accession>
<accession>B2RCQ3</accession>
<accession>Q5BJD8</accession>
<protein>
    <recommendedName>
        <fullName>Probable ATP-dependent RNA helicase DDX10</fullName>
        <ecNumber>3.6.4.13</ecNumber>
    </recommendedName>
    <alternativeName>
        <fullName>DEAD box protein 10</fullName>
    </alternativeName>
</protein>
<sequence>MGKTANSPGSGARPDPVRSFNRWKKKHSHRQNKKKQLRKQLKKPEWQVERESISRLMQNYEKINVNEITRFSDFPLSKKTLKGLQEAQYRLVTEIQKQTIGLALQGKDVLGAAKTGSGKTLAFLVPVLEALYRLQWTSTDGLGVLIISPTRELAYQTFEVLRKVGKNHDFSAGLIIGGKDLKHEAERINNINILVCTPGRLLQHMDETVSFHATDLQMLVLDEADRILDMGFADTMNAVIENLPKKRQTLLFSATQTKSVKDLARLSLKNPEYVWVHEKAKYSTPATLEQNYIVCELQQKISVLYSFLRSHLKKKSIVFFSSCKEVQYLYRVFCRLRPGVSILALHGRQQQMRRMEVYNEFVRKRAAVLFATDIAARGLDFPAVNWVLQFDCPEDANTYIHRAGRTARYKEDGEALLILLPSEKAMVQQLLQKKVPVKEIKINPEKLIDVQKKLESILAQDQDLKERAQRCFVSYVRSVYLMKDKEVFDVSKLPIPEYALSLGLAVAPRVRFLQKMQKQPTKELVRSQADKVIEPRAPSLTNDEVEEFRAYFNEKMSILQKGGKRLEGTEHRQDNDTGNEEQEEEEDDEEEMEEKLAKAKGSQAPSLPNTSEAQKIKEVPTQFLDRDEEEEDADFLKVKRHNVFGLDLKDEKTLQKKEPSKSSIKKKMTKVAEAKKVMKRNFKVNKKITFTDEGELVQQWPQMQKSAIKDAEEDDDTGGINLHKAKERLQEEDKFDKEEYRKKIKAKHREKRLKEREARREANKRQAKAKDEEEAFLDWSDDDDDDDDGFDPSTLPDPDKYRSSEDSDSEDMENKISDTKKKQGMKKRSNSEVEDVGPTSHNRKKARWDTLEPLDTGLSLAEDEELVLHLLRSQS</sequence>
<feature type="chain" id="PRO_0000055083" description="Probable ATP-dependent RNA helicase DDX10">
    <location>
        <begin position="1"/>
        <end position="875"/>
    </location>
</feature>
<feature type="domain" description="Helicase ATP-binding" evidence="2">
    <location>
        <begin position="100"/>
        <end position="274"/>
    </location>
</feature>
<feature type="domain" description="Helicase C-terminal" evidence="3">
    <location>
        <begin position="287"/>
        <end position="448"/>
    </location>
</feature>
<feature type="region of interest" description="Disordered" evidence="4">
    <location>
        <begin position="1"/>
        <end position="43"/>
    </location>
</feature>
<feature type="region of interest" description="Disordered" evidence="4">
    <location>
        <begin position="562"/>
        <end position="631"/>
    </location>
</feature>
<feature type="region of interest" description="Disordered" evidence="4">
    <location>
        <begin position="703"/>
        <end position="850"/>
    </location>
</feature>
<feature type="short sequence motif" description="Q motif">
    <location>
        <begin position="69"/>
        <end position="97"/>
    </location>
</feature>
<feature type="short sequence motif" description="DEAD box">
    <location>
        <begin position="222"/>
        <end position="225"/>
    </location>
</feature>
<feature type="compositionally biased region" description="Basic residues" evidence="4">
    <location>
        <begin position="21"/>
        <end position="41"/>
    </location>
</feature>
<feature type="compositionally biased region" description="Basic and acidic residues" evidence="4">
    <location>
        <begin position="564"/>
        <end position="575"/>
    </location>
</feature>
<feature type="compositionally biased region" description="Acidic residues" evidence="4">
    <location>
        <begin position="577"/>
        <end position="593"/>
    </location>
</feature>
<feature type="compositionally biased region" description="Polar residues" evidence="4">
    <location>
        <begin position="603"/>
        <end position="613"/>
    </location>
</feature>
<feature type="compositionally biased region" description="Basic and acidic residues" evidence="4">
    <location>
        <begin position="727"/>
        <end position="741"/>
    </location>
</feature>
<feature type="compositionally biased region" description="Basic residues" evidence="4">
    <location>
        <begin position="742"/>
        <end position="751"/>
    </location>
</feature>
<feature type="compositionally biased region" description="Basic and acidic residues" evidence="4">
    <location>
        <begin position="752"/>
        <end position="771"/>
    </location>
</feature>
<feature type="compositionally biased region" description="Acidic residues" evidence="4">
    <location>
        <begin position="772"/>
        <end position="790"/>
    </location>
</feature>
<feature type="compositionally biased region" description="Basic and acidic residues" evidence="4">
    <location>
        <begin position="812"/>
        <end position="821"/>
    </location>
</feature>
<feature type="binding site">
    <location>
        <begin position="89"/>
        <end position="91"/>
    </location>
    <ligand>
        <name>ATP</name>
        <dbReference type="ChEBI" id="CHEBI:30616"/>
    </ligand>
</feature>
<feature type="binding site">
    <location>
        <position position="96"/>
    </location>
    <ligand>
        <name>ATP</name>
        <dbReference type="ChEBI" id="CHEBI:30616"/>
    </ligand>
</feature>
<feature type="binding site">
    <location>
        <begin position="113"/>
        <end position="120"/>
    </location>
    <ligand>
        <name>ATP</name>
        <dbReference type="ChEBI" id="CHEBI:30616"/>
    </ligand>
</feature>
<feature type="modified residue" description="Phosphothreonine" evidence="10">
    <location>
        <position position="4"/>
    </location>
</feature>
<feature type="modified residue" description="Phosphoserine" evidence="15">
    <location>
        <position position="7"/>
    </location>
</feature>
<feature type="modified residue" description="Phosphoserine" evidence="11 12 13 15">
    <location>
        <position position="539"/>
    </location>
</feature>
<feature type="modified residue" description="N6-acetyllysine" evidence="1">
    <location>
        <position position="555"/>
    </location>
</feature>
<feature type="modified residue" description="Phosphothreonine" evidence="15">
    <location>
        <position position="577"/>
    </location>
</feature>
<feature type="modified residue" description="Phosphoserine" evidence="14">
    <location>
        <position position="780"/>
    </location>
</feature>
<feature type="modified residue" description="Phosphoserine" evidence="11 15">
    <location>
        <position position="831"/>
    </location>
</feature>
<feature type="cross-link" description="Glycyl lysine isopeptide (Lys-Gly) (interchain with G-Cter in SUMO2)" evidence="16">
    <location>
        <position position="649"/>
    </location>
</feature>
<feature type="sequence variant" id="VAR_035840" description="In a breast cancer sample; somatic mutation." evidence="5">
    <original>L</original>
    <variation>V</variation>
    <location>
        <position position="566"/>
    </location>
</feature>
<feature type="sequence conflict" description="In Ref. 1; AAC50823." evidence="9" ref="1">
    <original>D</original>
    <variation>A</variation>
    <location>
        <position position="647"/>
    </location>
</feature>
<feature type="sequence conflict" description="In Ref. 1; AAC50823." evidence="9" ref="1">
    <original>E</original>
    <variation>D</variation>
    <location>
        <position position="658"/>
    </location>
</feature>
<feature type="sequence conflict" description="In Ref. 1; AAC50823." evidence="9" ref="1">
    <original>K</original>
    <variation>N</variation>
    <location>
        <position position="661"/>
    </location>
</feature>
<feature type="helix" evidence="17">
    <location>
        <begin position="47"/>
        <end position="58"/>
    </location>
</feature>
<feature type="turn" evidence="17">
    <location>
        <begin position="59"/>
        <end position="62"/>
    </location>
</feature>
<feature type="helix" evidence="17">
    <location>
        <begin position="65"/>
        <end position="67"/>
    </location>
</feature>
<feature type="helix" evidence="17">
    <location>
        <begin position="71"/>
        <end position="73"/>
    </location>
</feature>
<feature type="helix" evidence="17">
    <location>
        <begin position="78"/>
        <end position="86"/>
    </location>
</feature>
<feature type="helix" evidence="17">
    <location>
        <begin position="94"/>
        <end position="104"/>
    </location>
</feature>
<feature type="strand" evidence="17">
    <location>
        <begin position="109"/>
        <end position="112"/>
    </location>
</feature>
<feature type="helix" evidence="17">
    <location>
        <begin position="119"/>
        <end position="133"/>
    </location>
</feature>
<feature type="helix" evidence="17">
    <location>
        <begin position="138"/>
        <end position="140"/>
    </location>
</feature>
<feature type="strand" evidence="17">
    <location>
        <begin position="144"/>
        <end position="147"/>
    </location>
</feature>
<feature type="helix" evidence="17">
    <location>
        <begin position="151"/>
        <end position="164"/>
    </location>
</feature>
<feature type="turn" evidence="17">
    <location>
        <begin position="165"/>
        <end position="167"/>
    </location>
</feature>
<feature type="strand" evidence="17">
    <location>
        <begin position="172"/>
        <end position="175"/>
    </location>
</feature>
<feature type="helix" evidence="17">
    <location>
        <begin position="182"/>
        <end position="188"/>
    </location>
</feature>
<feature type="strand" evidence="17">
    <location>
        <begin position="192"/>
        <end position="196"/>
    </location>
</feature>
<feature type="helix" evidence="17">
    <location>
        <begin position="198"/>
        <end position="207"/>
    </location>
</feature>
<feature type="strand" evidence="17">
    <location>
        <begin position="218"/>
        <end position="221"/>
    </location>
</feature>
<feature type="helix" evidence="17">
    <location>
        <begin position="224"/>
        <end position="229"/>
    </location>
</feature>
<feature type="turn" evidence="17">
    <location>
        <begin position="230"/>
        <end position="232"/>
    </location>
</feature>
<feature type="helix" evidence="17">
    <location>
        <begin position="233"/>
        <end position="241"/>
    </location>
</feature>
<feature type="strand" evidence="17">
    <location>
        <begin position="247"/>
        <end position="255"/>
    </location>
</feature>
<feature type="helix" evidence="17">
    <location>
        <begin position="258"/>
        <end position="266"/>
    </location>
</feature>
<feature type="strand" evidence="17">
    <location>
        <begin position="272"/>
        <end position="275"/>
    </location>
</feature>
<reference key="1">
    <citation type="journal article" date="1996" name="Genomics">
        <title>A human gene (DDX10) encoding a putative DEAD-box RNA helicase at 11q22-q23.</title>
        <authorList>
            <person name="Savitsky K."/>
            <person name="Ziv Y."/>
            <person name="Bar-Shira A."/>
            <person name="Gilad S."/>
            <person name="Tagle D.A."/>
            <person name="Smith S."/>
            <person name="Uziel T."/>
            <person name="Sfez S."/>
            <person name="Nahmias J."/>
            <person name="Sartiel A."/>
            <person name="Eddy R.L."/>
            <person name="Shows T.B."/>
            <person name="Collins F.S."/>
            <person name="Shiloh Y."/>
            <person name="Rotman G."/>
        </authorList>
    </citation>
    <scope>NUCLEOTIDE SEQUENCE [MRNA]</scope>
</reference>
<reference key="2">
    <citation type="submission" date="2000-03" db="EMBL/GenBank/DDBJ databases">
        <title>Molecular analysis of the chromosomal breakpoints and identification of the repetitive sequences near the breakpoints of NUP98 in therapy-related leukemia with inv(11)(p15q22).</title>
        <authorList>
            <person name="Arai Y."/>
            <person name="Kaneko Y."/>
            <person name="Kubo T."/>
            <person name="Arai K."/>
            <person name="Hosoda F."/>
            <person name="Ohki M."/>
        </authorList>
    </citation>
    <scope>NUCLEOTIDE SEQUENCE [MRNA]</scope>
</reference>
<reference key="3">
    <citation type="journal article" date="2004" name="Nat. Genet.">
        <title>Complete sequencing and characterization of 21,243 full-length human cDNAs.</title>
        <authorList>
            <person name="Ota T."/>
            <person name="Suzuki Y."/>
            <person name="Nishikawa T."/>
            <person name="Otsuki T."/>
            <person name="Sugiyama T."/>
            <person name="Irie R."/>
            <person name="Wakamatsu A."/>
            <person name="Hayashi K."/>
            <person name="Sato H."/>
            <person name="Nagai K."/>
            <person name="Kimura K."/>
            <person name="Makita H."/>
            <person name="Sekine M."/>
            <person name="Obayashi M."/>
            <person name="Nishi T."/>
            <person name="Shibahara T."/>
            <person name="Tanaka T."/>
            <person name="Ishii S."/>
            <person name="Yamamoto J."/>
            <person name="Saito K."/>
            <person name="Kawai Y."/>
            <person name="Isono Y."/>
            <person name="Nakamura Y."/>
            <person name="Nagahari K."/>
            <person name="Murakami K."/>
            <person name="Yasuda T."/>
            <person name="Iwayanagi T."/>
            <person name="Wagatsuma M."/>
            <person name="Shiratori A."/>
            <person name="Sudo H."/>
            <person name="Hosoiri T."/>
            <person name="Kaku Y."/>
            <person name="Kodaira H."/>
            <person name="Kondo H."/>
            <person name="Sugawara M."/>
            <person name="Takahashi M."/>
            <person name="Kanda K."/>
            <person name="Yokoi T."/>
            <person name="Furuya T."/>
            <person name="Kikkawa E."/>
            <person name="Omura Y."/>
            <person name="Abe K."/>
            <person name="Kamihara K."/>
            <person name="Katsuta N."/>
            <person name="Sato K."/>
            <person name="Tanikawa M."/>
            <person name="Yamazaki M."/>
            <person name="Ninomiya K."/>
            <person name="Ishibashi T."/>
            <person name="Yamashita H."/>
            <person name="Murakawa K."/>
            <person name="Fujimori K."/>
            <person name="Tanai H."/>
            <person name="Kimata M."/>
            <person name="Watanabe M."/>
            <person name="Hiraoka S."/>
            <person name="Chiba Y."/>
            <person name="Ishida S."/>
            <person name="Ono Y."/>
            <person name="Takiguchi S."/>
            <person name="Watanabe S."/>
            <person name="Yosida M."/>
            <person name="Hotuta T."/>
            <person name="Kusano J."/>
            <person name="Kanehori K."/>
            <person name="Takahashi-Fujii A."/>
            <person name="Hara H."/>
            <person name="Tanase T.-O."/>
            <person name="Nomura Y."/>
            <person name="Togiya S."/>
            <person name="Komai F."/>
            <person name="Hara R."/>
            <person name="Takeuchi K."/>
            <person name="Arita M."/>
            <person name="Imose N."/>
            <person name="Musashino K."/>
            <person name="Yuuki H."/>
            <person name="Oshima A."/>
            <person name="Sasaki N."/>
            <person name="Aotsuka S."/>
            <person name="Yoshikawa Y."/>
            <person name="Matsunawa H."/>
            <person name="Ichihara T."/>
            <person name="Shiohata N."/>
            <person name="Sano S."/>
            <person name="Moriya S."/>
            <person name="Momiyama H."/>
            <person name="Satoh N."/>
            <person name="Takami S."/>
            <person name="Terashima Y."/>
            <person name="Suzuki O."/>
            <person name="Nakagawa S."/>
            <person name="Senoh A."/>
            <person name="Mizoguchi H."/>
            <person name="Goto Y."/>
            <person name="Shimizu F."/>
            <person name="Wakebe H."/>
            <person name="Hishigaki H."/>
            <person name="Watanabe T."/>
            <person name="Sugiyama A."/>
            <person name="Takemoto M."/>
            <person name="Kawakami B."/>
            <person name="Yamazaki M."/>
            <person name="Watanabe K."/>
            <person name="Kumagai A."/>
            <person name="Itakura S."/>
            <person name="Fukuzumi Y."/>
            <person name="Fujimori Y."/>
            <person name="Komiyama M."/>
            <person name="Tashiro H."/>
            <person name="Tanigami A."/>
            <person name="Fujiwara T."/>
            <person name="Ono T."/>
            <person name="Yamada K."/>
            <person name="Fujii Y."/>
            <person name="Ozaki K."/>
            <person name="Hirao M."/>
            <person name="Ohmori Y."/>
            <person name="Kawabata A."/>
            <person name="Hikiji T."/>
            <person name="Kobatake N."/>
            <person name="Inagaki H."/>
            <person name="Ikema Y."/>
            <person name="Okamoto S."/>
            <person name="Okitani R."/>
            <person name="Kawakami T."/>
            <person name="Noguchi S."/>
            <person name="Itoh T."/>
            <person name="Shigeta K."/>
            <person name="Senba T."/>
            <person name="Matsumura K."/>
            <person name="Nakajima Y."/>
            <person name="Mizuno T."/>
            <person name="Morinaga M."/>
            <person name="Sasaki M."/>
            <person name="Togashi T."/>
            <person name="Oyama M."/>
            <person name="Hata H."/>
            <person name="Watanabe M."/>
            <person name="Komatsu T."/>
            <person name="Mizushima-Sugano J."/>
            <person name="Satoh T."/>
            <person name="Shirai Y."/>
            <person name="Takahashi Y."/>
            <person name="Nakagawa K."/>
            <person name="Okumura K."/>
            <person name="Nagase T."/>
            <person name="Nomura N."/>
            <person name="Kikuchi H."/>
            <person name="Masuho Y."/>
            <person name="Yamashita R."/>
            <person name="Nakai K."/>
            <person name="Yada T."/>
            <person name="Nakamura Y."/>
            <person name="Ohara O."/>
            <person name="Isogai T."/>
            <person name="Sugano S."/>
        </authorList>
    </citation>
    <scope>NUCLEOTIDE SEQUENCE [LARGE SCALE MRNA]</scope>
    <source>
        <tissue>Cerebellum</tissue>
    </source>
</reference>
<reference key="4">
    <citation type="submission" date="2005-07" db="EMBL/GenBank/DDBJ databases">
        <authorList>
            <person name="Mural R.J."/>
            <person name="Istrail S."/>
            <person name="Sutton G.G."/>
            <person name="Florea L."/>
            <person name="Halpern A.L."/>
            <person name="Mobarry C.M."/>
            <person name="Lippert R."/>
            <person name="Walenz B."/>
            <person name="Shatkay H."/>
            <person name="Dew I."/>
            <person name="Miller J.R."/>
            <person name="Flanigan M.J."/>
            <person name="Edwards N.J."/>
            <person name="Bolanos R."/>
            <person name="Fasulo D."/>
            <person name="Halldorsson B.V."/>
            <person name="Hannenhalli S."/>
            <person name="Turner R."/>
            <person name="Yooseph S."/>
            <person name="Lu F."/>
            <person name="Nusskern D.R."/>
            <person name="Shue B.C."/>
            <person name="Zheng X.H."/>
            <person name="Zhong F."/>
            <person name="Delcher A.L."/>
            <person name="Huson D.H."/>
            <person name="Kravitz S.A."/>
            <person name="Mouchard L."/>
            <person name="Reinert K."/>
            <person name="Remington K.A."/>
            <person name="Clark A.G."/>
            <person name="Waterman M.S."/>
            <person name="Eichler E.E."/>
            <person name="Adams M.D."/>
            <person name="Hunkapiller M.W."/>
            <person name="Myers E.W."/>
            <person name="Venter J.C."/>
        </authorList>
    </citation>
    <scope>NUCLEOTIDE SEQUENCE [LARGE SCALE GENOMIC DNA]</scope>
</reference>
<reference key="5">
    <citation type="journal article" date="2004" name="Genome Res.">
        <title>The status, quality, and expansion of the NIH full-length cDNA project: the Mammalian Gene Collection (MGC).</title>
        <authorList>
            <consortium name="The MGC Project Team"/>
        </authorList>
    </citation>
    <scope>NUCLEOTIDE SEQUENCE [LARGE SCALE MRNA]</scope>
    <source>
        <tissue>Testis</tissue>
    </source>
</reference>
<reference key="6">
    <citation type="journal article" date="2008" name="J. Proteome Res.">
        <title>Combining protein-based IMAC, peptide-based IMAC, and MudPIT for efficient phosphoproteomic analysis.</title>
        <authorList>
            <person name="Cantin G.T."/>
            <person name="Yi W."/>
            <person name="Lu B."/>
            <person name="Park S.K."/>
            <person name="Xu T."/>
            <person name="Lee J.-D."/>
            <person name="Yates J.R. III"/>
        </authorList>
    </citation>
    <scope>PHOSPHORYLATION [LARGE SCALE ANALYSIS] AT THR-4</scope>
    <scope>IDENTIFICATION BY MASS SPECTROMETRY [LARGE SCALE ANALYSIS]</scope>
    <source>
        <tissue>Cervix carcinoma</tissue>
    </source>
</reference>
<reference key="7">
    <citation type="journal article" date="2008" name="Proc. Natl. Acad. Sci. U.S.A.">
        <title>A quantitative atlas of mitotic phosphorylation.</title>
        <authorList>
            <person name="Dephoure N."/>
            <person name="Zhou C."/>
            <person name="Villen J."/>
            <person name="Beausoleil S.A."/>
            <person name="Bakalarski C.E."/>
            <person name="Elledge S.J."/>
            <person name="Gygi S.P."/>
        </authorList>
    </citation>
    <scope>PHOSPHORYLATION [LARGE SCALE ANALYSIS] AT SER-539 AND SER-831</scope>
    <scope>IDENTIFICATION BY MASS SPECTROMETRY [LARGE SCALE ANALYSIS]</scope>
    <source>
        <tissue>Cervix carcinoma</tissue>
    </source>
</reference>
<reference key="8">
    <citation type="journal article" date="2009" name="Sci. Signal.">
        <title>Quantitative phosphoproteomic analysis of T cell receptor signaling reveals system-wide modulation of protein-protein interactions.</title>
        <authorList>
            <person name="Mayya V."/>
            <person name="Lundgren D.H."/>
            <person name="Hwang S.-I."/>
            <person name="Rezaul K."/>
            <person name="Wu L."/>
            <person name="Eng J.K."/>
            <person name="Rodionov V."/>
            <person name="Han D.K."/>
        </authorList>
    </citation>
    <scope>PHOSPHORYLATION [LARGE SCALE ANALYSIS] AT SER-539</scope>
    <scope>IDENTIFICATION BY MASS SPECTROMETRY [LARGE SCALE ANALYSIS]</scope>
    <source>
        <tissue>Leukemic T-cell</tissue>
    </source>
</reference>
<reference key="9">
    <citation type="journal article" date="2010" name="Sci. Signal.">
        <title>Quantitative phosphoproteomics reveals widespread full phosphorylation site occupancy during mitosis.</title>
        <authorList>
            <person name="Olsen J.V."/>
            <person name="Vermeulen M."/>
            <person name="Santamaria A."/>
            <person name="Kumar C."/>
            <person name="Miller M.L."/>
            <person name="Jensen L.J."/>
            <person name="Gnad F."/>
            <person name="Cox J."/>
            <person name="Jensen T.S."/>
            <person name="Nigg E.A."/>
            <person name="Brunak S."/>
            <person name="Mann M."/>
        </authorList>
    </citation>
    <scope>PHOSPHORYLATION [LARGE SCALE ANALYSIS] AT SER-539</scope>
    <scope>IDENTIFICATION BY MASS SPECTROMETRY [LARGE SCALE ANALYSIS]</scope>
    <source>
        <tissue>Cervix carcinoma</tissue>
    </source>
</reference>
<reference key="10">
    <citation type="journal article" date="2011" name="Sci. Signal.">
        <title>System-wide temporal characterization of the proteome and phosphoproteome of human embryonic stem cell differentiation.</title>
        <authorList>
            <person name="Rigbolt K.T."/>
            <person name="Prokhorova T.A."/>
            <person name="Akimov V."/>
            <person name="Henningsen J."/>
            <person name="Johansen P.T."/>
            <person name="Kratchmarova I."/>
            <person name="Kassem M."/>
            <person name="Mann M."/>
            <person name="Olsen J.V."/>
            <person name="Blagoev B."/>
        </authorList>
    </citation>
    <scope>PHOSPHORYLATION [LARGE SCALE ANALYSIS] AT SER-780</scope>
    <scope>IDENTIFICATION BY MASS SPECTROMETRY [LARGE SCALE ANALYSIS]</scope>
</reference>
<reference key="11">
    <citation type="journal article" date="2013" name="J. Proteome Res.">
        <title>Toward a comprehensive characterization of a human cancer cell phosphoproteome.</title>
        <authorList>
            <person name="Zhou H."/>
            <person name="Di Palma S."/>
            <person name="Preisinger C."/>
            <person name="Peng M."/>
            <person name="Polat A.N."/>
            <person name="Heck A.J."/>
            <person name="Mohammed S."/>
        </authorList>
    </citation>
    <scope>PHOSPHORYLATION [LARGE SCALE ANALYSIS] AT SER-7; SER-539; THR-577 AND SER-831</scope>
    <scope>IDENTIFICATION BY MASS SPECTROMETRY [LARGE SCALE ANALYSIS]</scope>
    <source>
        <tissue>Cervix carcinoma</tissue>
        <tissue>Erythroleukemia</tissue>
    </source>
</reference>
<reference key="12">
    <citation type="journal article" date="2017" name="Nat. Struct. Mol. Biol.">
        <title>Site-specific mapping of the human SUMO proteome reveals co-modification with phosphorylation.</title>
        <authorList>
            <person name="Hendriks I.A."/>
            <person name="Lyon D."/>
            <person name="Young C."/>
            <person name="Jensen L.J."/>
            <person name="Vertegaal A.C."/>
            <person name="Nielsen M.L."/>
        </authorList>
    </citation>
    <scope>SUMOYLATION [LARGE SCALE ANALYSIS] AT LYS-649</scope>
    <scope>IDENTIFICATION BY MASS SPECTROMETRY [LARGE SCALE ANALYSIS]</scope>
</reference>
<reference key="13">
    <citation type="journal article" date="2010" name="PLoS ONE">
        <title>Comparative structural analysis of human DEAD-box RNA helicases.</title>
        <authorList>
            <person name="Schutz P."/>
            <person name="Karlberg T."/>
            <person name="van den Berg S."/>
            <person name="Collins R."/>
            <person name="Lehtio L."/>
            <person name="Hogbom M."/>
            <person name="Holmberg-Schiavone L."/>
            <person name="Tempel W."/>
            <person name="Park H.W."/>
            <person name="Hammarstrom M."/>
            <person name="Moche M."/>
            <person name="Thorsell A.G."/>
            <person name="Schuler H."/>
        </authorList>
    </citation>
    <scope>X-RAY CRYSTALLOGRAPHY (2.15 ANGSTROMS) OF 47-280 IN COMPLEX WITH ADP</scope>
</reference>
<reference key="14">
    <citation type="journal article" date="2006" name="Science">
        <title>The consensus coding sequences of human breast and colorectal cancers.</title>
        <authorList>
            <person name="Sjoeblom T."/>
            <person name="Jones S."/>
            <person name="Wood L.D."/>
            <person name="Parsons D.W."/>
            <person name="Lin J."/>
            <person name="Barber T.D."/>
            <person name="Mandelker D."/>
            <person name="Leary R.J."/>
            <person name="Ptak J."/>
            <person name="Silliman N."/>
            <person name="Szabo S."/>
            <person name="Buckhaults P."/>
            <person name="Farrell C."/>
            <person name="Meeh P."/>
            <person name="Markowitz S.D."/>
            <person name="Willis J."/>
            <person name="Dawson D."/>
            <person name="Willson J.K.V."/>
            <person name="Gazdar A.F."/>
            <person name="Hartigan J."/>
            <person name="Wu L."/>
            <person name="Liu C."/>
            <person name="Parmigiani G."/>
            <person name="Park B.H."/>
            <person name="Bachman K.E."/>
            <person name="Papadopoulos N."/>
            <person name="Vogelstein B."/>
            <person name="Kinzler K.W."/>
            <person name="Velculescu V.E."/>
        </authorList>
    </citation>
    <scope>VARIANT [LARGE SCALE ANALYSIS] VAL-566</scope>
</reference>
<reference key="15">
    <citation type="journal article" date="2020" name="Xi Bao Yu Fen Zi Mian Yi Xue Za Zhi">
        <title>DDX10 promotes AIM2-inflammasome activation by maintaining AIM2 protein stability.</title>
        <authorList>
            <person name="Zhao S."/>
            <person name="Lin M."/>
            <person name="Zhang Y."/>
        </authorList>
    </citation>
    <scope>FUNCTION</scope>
    <scope>SUBCELLULAR LOCATION</scope>
    <scope>INTERACTION WITH AIM2</scope>
</reference>
<reference key="16">
    <citation type="journal article" date="2021" name="PLoS Genet.">
        <title>DEAD-box RNA helicase Dbp4/DDX10 is an enhancer of alpha-synuclein toxicity and oligomerization.</title>
        <authorList>
            <person name="Popova B."/>
            <person name="Wang D."/>
            <person name="Paetz C."/>
            <person name="Akkermann D."/>
            <person name="Lazaro D.F."/>
            <person name="Galka D."/>
            <person name="Kolog Gulko M."/>
            <person name="Bohnsack M.T."/>
            <person name="Moebius W."/>
            <person name="Bohnsack K.E."/>
            <person name="Outeiro T.F."/>
            <person name="Braus G.H."/>
        </authorList>
    </citation>
    <scope>INTERACTION WITH SNCA</scope>
    <scope>SUBCELLULAR LOCATION</scope>
</reference>
<reference key="17">
    <citation type="journal article" date="2023" name="Autophagy">
        <title>Porcine reproductive and respiratory syndrome virus degrades DDX10 via SQSTM1/p62-dependent selective autophagy to antagonize its antiviral activity.</title>
        <authorList>
            <person name="Li J."/>
            <person name="Zhou Y."/>
            <person name="Zhao W."/>
            <person name="Liu J."/>
            <person name="Ullah R."/>
            <person name="Fang P."/>
            <person name="Fang L."/>
            <person name="Xiao S."/>
        </authorList>
    </citation>
    <scope>FUNCTION</scope>
    <scope>SUBCELLULAR LOCATION</scope>
</reference>
<keyword id="KW-0002">3D-structure</keyword>
<keyword id="KW-0007">Acetylation</keyword>
<keyword id="KW-0067">ATP-binding</keyword>
<keyword id="KW-0963">Cytoplasm</keyword>
<keyword id="KW-0347">Helicase</keyword>
<keyword id="KW-0378">Hydrolase</keyword>
<keyword id="KW-1017">Isopeptide bond</keyword>
<keyword id="KW-0547">Nucleotide-binding</keyword>
<keyword id="KW-0539">Nucleus</keyword>
<keyword id="KW-0597">Phosphoprotein</keyword>
<keyword id="KW-1267">Proteomics identification</keyword>
<keyword id="KW-1185">Reference proteome</keyword>
<keyword id="KW-0694">RNA-binding</keyword>
<keyword id="KW-0832">Ubl conjugation</keyword>
<proteinExistence type="evidence at protein level"/>
<dbReference type="EC" id="3.6.4.13"/>
<dbReference type="EMBL" id="U28042">
    <property type="protein sequence ID" value="AAC50823.1"/>
    <property type="molecule type" value="mRNA"/>
</dbReference>
<dbReference type="EMBL" id="AB040537">
    <property type="protein sequence ID" value="BAB18536.1"/>
    <property type="molecule type" value="mRNA"/>
</dbReference>
<dbReference type="EMBL" id="AK315216">
    <property type="protein sequence ID" value="BAG37650.1"/>
    <property type="molecule type" value="mRNA"/>
</dbReference>
<dbReference type="EMBL" id="CH471065">
    <property type="protein sequence ID" value="EAW67122.1"/>
    <property type="molecule type" value="Genomic_DNA"/>
</dbReference>
<dbReference type="EMBL" id="BC091521">
    <property type="protein sequence ID" value="AAH91521.1"/>
    <property type="molecule type" value="mRNA"/>
</dbReference>
<dbReference type="EMBL" id="BC093654">
    <property type="protein sequence ID" value="AAH93654.1"/>
    <property type="molecule type" value="mRNA"/>
</dbReference>
<dbReference type="EMBL" id="BC093656">
    <property type="protein sequence ID" value="AAH93656.1"/>
    <property type="molecule type" value="mRNA"/>
</dbReference>
<dbReference type="CCDS" id="CCDS8342.1"/>
<dbReference type="RefSeq" id="NP_004389.2">
    <property type="nucleotide sequence ID" value="NM_004398.3"/>
</dbReference>
<dbReference type="PDB" id="2PL3">
    <property type="method" value="X-ray"/>
    <property type="resolution" value="2.15 A"/>
    <property type="chains" value="A=47-280"/>
</dbReference>
<dbReference type="PDBsum" id="2PL3"/>
<dbReference type="SMR" id="Q13206"/>
<dbReference type="BioGRID" id="108027">
    <property type="interactions" value="224"/>
</dbReference>
<dbReference type="FunCoup" id="Q13206">
    <property type="interactions" value="3301"/>
</dbReference>
<dbReference type="IntAct" id="Q13206">
    <property type="interactions" value="132"/>
</dbReference>
<dbReference type="MINT" id="Q13206"/>
<dbReference type="STRING" id="9606.ENSP00000314348"/>
<dbReference type="GlyGen" id="Q13206">
    <property type="glycosylation" value="3 sites, 1 O-linked glycan (3 sites)"/>
</dbReference>
<dbReference type="iPTMnet" id="Q13206"/>
<dbReference type="PhosphoSitePlus" id="Q13206"/>
<dbReference type="SwissPalm" id="Q13206"/>
<dbReference type="BioMuta" id="DDX10"/>
<dbReference type="DMDM" id="76803554"/>
<dbReference type="jPOST" id="Q13206"/>
<dbReference type="MassIVE" id="Q13206"/>
<dbReference type="PaxDb" id="9606-ENSP00000314348"/>
<dbReference type="PeptideAtlas" id="Q13206"/>
<dbReference type="ProteomicsDB" id="59224"/>
<dbReference type="Pumba" id="Q13206"/>
<dbReference type="Antibodypedia" id="1401">
    <property type="antibodies" value="48 antibodies from 16 providers"/>
</dbReference>
<dbReference type="DNASU" id="1662"/>
<dbReference type="Ensembl" id="ENST00000322536.8">
    <property type="protein sequence ID" value="ENSP00000314348.3"/>
    <property type="gene ID" value="ENSG00000178105.12"/>
</dbReference>
<dbReference type="GeneID" id="1662"/>
<dbReference type="KEGG" id="hsa:1662"/>
<dbReference type="MANE-Select" id="ENST00000322536.8">
    <property type="protein sequence ID" value="ENSP00000314348.3"/>
    <property type="RefSeq nucleotide sequence ID" value="NM_004398.4"/>
    <property type="RefSeq protein sequence ID" value="NP_004389.2"/>
</dbReference>
<dbReference type="UCSC" id="uc001pkm.4">
    <property type="organism name" value="human"/>
</dbReference>
<dbReference type="AGR" id="HGNC:2735"/>
<dbReference type="CTD" id="1662"/>
<dbReference type="DisGeNET" id="1662"/>
<dbReference type="GeneCards" id="DDX10"/>
<dbReference type="HGNC" id="HGNC:2735">
    <property type="gene designation" value="DDX10"/>
</dbReference>
<dbReference type="HPA" id="ENSG00000178105">
    <property type="expression patterns" value="Low tissue specificity"/>
</dbReference>
<dbReference type="MalaCards" id="DDX10"/>
<dbReference type="MIM" id="601235">
    <property type="type" value="gene"/>
</dbReference>
<dbReference type="neXtProt" id="NX_Q13206"/>
<dbReference type="OpenTargets" id="ENSG00000178105"/>
<dbReference type="PharmGKB" id="PA27200"/>
<dbReference type="VEuPathDB" id="HostDB:ENSG00000178105"/>
<dbReference type="eggNOG" id="KOG0343">
    <property type="taxonomic scope" value="Eukaryota"/>
</dbReference>
<dbReference type="GeneTree" id="ENSGT00550000074980"/>
<dbReference type="InParanoid" id="Q13206"/>
<dbReference type="OMA" id="FLWRQKQ"/>
<dbReference type="OrthoDB" id="10259640at2759"/>
<dbReference type="PAN-GO" id="Q13206">
    <property type="GO annotations" value="2 GO annotations based on evolutionary models"/>
</dbReference>
<dbReference type="PhylomeDB" id="Q13206"/>
<dbReference type="TreeFam" id="TF315215"/>
<dbReference type="PathwayCommons" id="Q13206"/>
<dbReference type="SignaLink" id="Q13206"/>
<dbReference type="BioGRID-ORCS" id="1662">
    <property type="hits" value="808 hits in 1155 CRISPR screens"/>
</dbReference>
<dbReference type="CD-CODE" id="232F8A39">
    <property type="entry name" value="P-body"/>
</dbReference>
<dbReference type="CD-CODE" id="91857CE7">
    <property type="entry name" value="Nucleolus"/>
</dbReference>
<dbReference type="ChiTaRS" id="DDX10">
    <property type="organism name" value="human"/>
</dbReference>
<dbReference type="EvolutionaryTrace" id="Q13206"/>
<dbReference type="GeneWiki" id="DDX10"/>
<dbReference type="GenomeRNAi" id="1662"/>
<dbReference type="Pharos" id="Q13206">
    <property type="development level" value="Tbio"/>
</dbReference>
<dbReference type="PRO" id="PR:Q13206"/>
<dbReference type="Proteomes" id="UP000005640">
    <property type="component" value="Chromosome 11"/>
</dbReference>
<dbReference type="RNAct" id="Q13206">
    <property type="molecule type" value="protein"/>
</dbReference>
<dbReference type="Bgee" id="ENSG00000178105">
    <property type="expression patterns" value="Expressed in sural nerve and 177 other cell types or tissues"/>
</dbReference>
<dbReference type="ExpressionAtlas" id="Q13206">
    <property type="expression patterns" value="baseline and differential"/>
</dbReference>
<dbReference type="GO" id="GO:0005737">
    <property type="term" value="C:cytoplasm"/>
    <property type="evidence" value="ECO:0007669"/>
    <property type="project" value="UniProtKB-SubCell"/>
</dbReference>
<dbReference type="GO" id="GO:0005730">
    <property type="term" value="C:nucleolus"/>
    <property type="evidence" value="ECO:0007669"/>
    <property type="project" value="UniProtKB-SubCell"/>
</dbReference>
<dbReference type="GO" id="GO:0005634">
    <property type="term" value="C:nucleus"/>
    <property type="evidence" value="ECO:0000318"/>
    <property type="project" value="GO_Central"/>
</dbReference>
<dbReference type="GO" id="GO:0005524">
    <property type="term" value="F:ATP binding"/>
    <property type="evidence" value="ECO:0007669"/>
    <property type="project" value="UniProtKB-KW"/>
</dbReference>
<dbReference type="GO" id="GO:0016887">
    <property type="term" value="F:ATP hydrolysis activity"/>
    <property type="evidence" value="ECO:0007669"/>
    <property type="project" value="RHEA"/>
</dbReference>
<dbReference type="GO" id="GO:0003723">
    <property type="term" value="F:RNA binding"/>
    <property type="evidence" value="ECO:0007005"/>
    <property type="project" value="UniProtKB"/>
</dbReference>
<dbReference type="GO" id="GO:0003724">
    <property type="term" value="F:RNA helicase activity"/>
    <property type="evidence" value="ECO:0000304"/>
    <property type="project" value="ProtInc"/>
</dbReference>
<dbReference type="GO" id="GO:0097065">
    <property type="term" value="P:anterior head development"/>
    <property type="evidence" value="ECO:0007669"/>
    <property type="project" value="Ensembl"/>
</dbReference>
<dbReference type="GO" id="GO:0006364">
    <property type="term" value="P:rRNA processing"/>
    <property type="evidence" value="ECO:0000318"/>
    <property type="project" value="GO_Central"/>
</dbReference>
<dbReference type="CDD" id="cd17941">
    <property type="entry name" value="DEADc_DDX10"/>
    <property type="match status" value="1"/>
</dbReference>
<dbReference type="CDD" id="cd18787">
    <property type="entry name" value="SF2_C_DEAD"/>
    <property type="match status" value="1"/>
</dbReference>
<dbReference type="FunFam" id="3.40.50.300:FF:000874">
    <property type="entry name" value="RNA helicase"/>
    <property type="match status" value="1"/>
</dbReference>
<dbReference type="FunFam" id="3.40.50.300:FF:001089">
    <property type="entry name" value="RNA helicase"/>
    <property type="match status" value="1"/>
</dbReference>
<dbReference type="Gene3D" id="3.40.50.300">
    <property type="entry name" value="P-loop containing nucleotide triphosphate hydrolases"/>
    <property type="match status" value="2"/>
</dbReference>
<dbReference type="InterPro" id="IPR011545">
    <property type="entry name" value="DEAD/DEAH_box_helicase_dom"/>
</dbReference>
<dbReference type="InterPro" id="IPR014001">
    <property type="entry name" value="Helicase_ATP-bd"/>
</dbReference>
<dbReference type="InterPro" id="IPR001650">
    <property type="entry name" value="Helicase_C-like"/>
</dbReference>
<dbReference type="InterPro" id="IPR027417">
    <property type="entry name" value="P-loop_NTPase"/>
</dbReference>
<dbReference type="InterPro" id="IPR000629">
    <property type="entry name" value="RNA-helicase_DEAD-box_CS"/>
</dbReference>
<dbReference type="InterPro" id="IPR014014">
    <property type="entry name" value="RNA_helicase_DEAD_Q_motif"/>
</dbReference>
<dbReference type="InterPro" id="IPR025313">
    <property type="entry name" value="SPB4-like_CTE"/>
</dbReference>
<dbReference type="PANTHER" id="PTHR24031">
    <property type="entry name" value="RNA HELICASE"/>
    <property type="match status" value="1"/>
</dbReference>
<dbReference type="Pfam" id="PF13959">
    <property type="entry name" value="CTE_SPB4"/>
    <property type="match status" value="1"/>
</dbReference>
<dbReference type="Pfam" id="PF00270">
    <property type="entry name" value="DEAD"/>
    <property type="match status" value="1"/>
</dbReference>
<dbReference type="Pfam" id="PF00271">
    <property type="entry name" value="Helicase_C"/>
    <property type="match status" value="1"/>
</dbReference>
<dbReference type="SMART" id="SM00487">
    <property type="entry name" value="DEXDc"/>
    <property type="match status" value="1"/>
</dbReference>
<dbReference type="SMART" id="SM01178">
    <property type="entry name" value="DUF4217"/>
    <property type="match status" value="1"/>
</dbReference>
<dbReference type="SMART" id="SM00490">
    <property type="entry name" value="HELICc"/>
    <property type="match status" value="1"/>
</dbReference>
<dbReference type="SUPFAM" id="SSF52540">
    <property type="entry name" value="P-loop containing nucleoside triphosphate hydrolases"/>
    <property type="match status" value="1"/>
</dbReference>
<dbReference type="PROSITE" id="PS00039">
    <property type="entry name" value="DEAD_ATP_HELICASE"/>
    <property type="match status" value="1"/>
</dbReference>
<dbReference type="PROSITE" id="PS51192">
    <property type="entry name" value="HELICASE_ATP_BIND_1"/>
    <property type="match status" value="1"/>
</dbReference>
<dbReference type="PROSITE" id="PS51194">
    <property type="entry name" value="HELICASE_CTER"/>
    <property type="match status" value="1"/>
</dbReference>
<dbReference type="PROSITE" id="PS51195">
    <property type="entry name" value="Q_MOTIF"/>
    <property type="match status" value="1"/>
</dbReference>
<evidence type="ECO:0000250" key="1">
    <source>
        <dbReference type="UniProtKB" id="Q80Y44"/>
    </source>
</evidence>
<evidence type="ECO:0000255" key="2">
    <source>
        <dbReference type="PROSITE-ProRule" id="PRU00541"/>
    </source>
</evidence>
<evidence type="ECO:0000255" key="3">
    <source>
        <dbReference type="PROSITE-ProRule" id="PRU00542"/>
    </source>
</evidence>
<evidence type="ECO:0000256" key="4">
    <source>
        <dbReference type="SAM" id="MobiDB-lite"/>
    </source>
</evidence>
<evidence type="ECO:0000269" key="5">
    <source>
    </source>
</evidence>
<evidence type="ECO:0000269" key="6">
    <source>
    </source>
</evidence>
<evidence type="ECO:0000269" key="7">
    <source>
    </source>
</evidence>
<evidence type="ECO:0000269" key="8">
    <source>
    </source>
</evidence>
<evidence type="ECO:0000305" key="9"/>
<evidence type="ECO:0007744" key="10">
    <source>
    </source>
</evidence>
<evidence type="ECO:0007744" key="11">
    <source>
    </source>
</evidence>
<evidence type="ECO:0007744" key="12">
    <source>
    </source>
</evidence>
<evidence type="ECO:0007744" key="13">
    <source>
    </source>
</evidence>
<evidence type="ECO:0007744" key="14">
    <source>
    </source>
</evidence>
<evidence type="ECO:0007744" key="15">
    <source>
    </source>
</evidence>
<evidence type="ECO:0007744" key="16">
    <source>
    </source>
</evidence>
<evidence type="ECO:0007829" key="17">
    <source>
        <dbReference type="PDB" id="2PL3"/>
    </source>
</evidence>
<comment type="function">
    <text evidence="6 8">Putative ATP-dependent RNA helicase that plays various role in innate immunity or inflammation. Plays a role in the enhancement of AIM2-induced inflammasome activation by interacting with AIM2 and stabilizing its protein level (PubMed:32519665). Negatively regulates viral infection by promoting interferon beta production and interferon stimulated genes/ISGs expression (PubMed:36779599).</text>
</comment>
<comment type="catalytic activity">
    <reaction>
        <text>ATP + H2O = ADP + phosphate + H(+)</text>
        <dbReference type="Rhea" id="RHEA:13065"/>
        <dbReference type="ChEBI" id="CHEBI:15377"/>
        <dbReference type="ChEBI" id="CHEBI:15378"/>
        <dbReference type="ChEBI" id="CHEBI:30616"/>
        <dbReference type="ChEBI" id="CHEBI:43474"/>
        <dbReference type="ChEBI" id="CHEBI:456216"/>
        <dbReference type="EC" id="3.6.4.13"/>
    </reaction>
</comment>
<comment type="subunit">
    <text evidence="6 7">Interacts with AIM2; this interaction promotes AIM2 stability (PubMed:32519665). Interacts with SCNA; this interaction causes DDX10 mislocalization to the nucleoplasm and cytoplasmic inclusions (PubMed:33657088).</text>
</comment>
<comment type="interaction">
    <interactant intactId="EBI-2514399">
        <id>Q13206</id>
    </interactant>
    <interactant intactId="EBI-353254">
        <id>P62750</id>
        <label>RPL23A</label>
    </interactant>
    <organismsDiffer>false</organismsDiffer>
    <experiments>3</experiments>
</comment>
<comment type="subcellular location">
    <subcellularLocation>
        <location evidence="6 7">Cytoplasm</location>
    </subcellularLocation>
    <subcellularLocation>
        <location evidence="8">Nucleus</location>
    </subcellularLocation>
    <subcellularLocation>
        <location evidence="7">Nucleus</location>
        <location evidence="7">Nucleolus</location>
    </subcellularLocation>
</comment>
<comment type="tissue specificity">
    <text>High in testis but widely expressed.</text>
</comment>
<comment type="domain">
    <text>The Q motif is unique to and characteristic of the DEAD box family of RNA helicases and controls ATP binding and hydrolysis.</text>
</comment>
<comment type="similarity">
    <text evidence="9">Belongs to the DEAD box helicase family. DDX10/DBP4 subfamily.</text>
</comment>
<comment type="online information" name="Atlas of Genetics and Cytogenetics in Oncology and Haematology">
    <link uri="https://atlasgeneticsoncology.org/gene/35/DDX10"/>
</comment>
<gene>
    <name type="primary">DDX10</name>
</gene>
<name>DDX10_HUMAN</name>
<organism>
    <name type="scientific">Homo sapiens</name>
    <name type="common">Human</name>
    <dbReference type="NCBI Taxonomy" id="9606"/>
    <lineage>
        <taxon>Eukaryota</taxon>
        <taxon>Metazoa</taxon>
        <taxon>Chordata</taxon>
        <taxon>Craniata</taxon>
        <taxon>Vertebrata</taxon>
        <taxon>Euteleostomi</taxon>
        <taxon>Mammalia</taxon>
        <taxon>Eutheria</taxon>
        <taxon>Euarchontoglires</taxon>
        <taxon>Primates</taxon>
        <taxon>Haplorrhini</taxon>
        <taxon>Catarrhini</taxon>
        <taxon>Hominidae</taxon>
        <taxon>Homo</taxon>
    </lineage>
</organism>